<feature type="chain" id="PRO_0000062892" description="Octanoyltransferase">
    <location>
        <begin position="1"/>
        <end position="218"/>
    </location>
</feature>
<feature type="domain" description="BPL/LPL catalytic" evidence="2">
    <location>
        <begin position="31"/>
        <end position="206"/>
    </location>
</feature>
<feature type="active site" description="Acyl-thioester intermediate" evidence="1">
    <location>
        <position position="168"/>
    </location>
</feature>
<feature type="binding site" evidence="1">
    <location>
        <begin position="70"/>
        <end position="77"/>
    </location>
    <ligand>
        <name>substrate</name>
    </ligand>
</feature>
<feature type="binding site" evidence="1">
    <location>
        <begin position="137"/>
        <end position="139"/>
    </location>
    <ligand>
        <name>substrate</name>
    </ligand>
</feature>
<feature type="binding site" evidence="1">
    <location>
        <begin position="150"/>
        <end position="152"/>
    </location>
    <ligand>
        <name>substrate</name>
    </ligand>
</feature>
<feature type="site" description="Lowers pKa of active site Cys" evidence="1">
    <location>
        <position position="134"/>
    </location>
</feature>
<protein>
    <recommendedName>
        <fullName evidence="1">Octanoyltransferase</fullName>
        <ecNumber evidence="1">2.3.1.181</ecNumber>
    </recommendedName>
    <alternativeName>
        <fullName evidence="1">Lipoate-protein ligase B</fullName>
    </alternativeName>
    <alternativeName>
        <fullName evidence="1">Lipoyl/octanoyl transferase</fullName>
    </alternativeName>
    <alternativeName>
        <fullName evidence="1">Octanoyl-[acyl-carrier-protein]-protein N-octanoyltransferase</fullName>
    </alternativeName>
</protein>
<accession>Q8DFD2</accession>
<proteinExistence type="inferred from homology"/>
<name>LIPB_VIBVU</name>
<keyword id="KW-0012">Acyltransferase</keyword>
<keyword id="KW-0963">Cytoplasm</keyword>
<keyword id="KW-0808">Transferase</keyword>
<sequence>MQNQLVVKRLGRRDYLPVWQAMHEFTDTRNEETPDEVWLVEHNPVFTQGQAGKAEHLLNTGDIPVVQSDRGGQVTYHGPGQLVAYFLINLRRKKLGVRDLVTTIENLVINTLKAYNIDSAARPDAPGVYVEGRKICSLGLRIRKGCSFHGLALNVNMDLSPFLRINPCGYQGMEMVQVSELGGPKDIALVEQQLVKELVNLLGYEQVEFSTEAEVREA</sequence>
<reference key="1">
    <citation type="submission" date="2002-12" db="EMBL/GenBank/DDBJ databases">
        <title>Complete genome sequence of Vibrio vulnificus CMCP6.</title>
        <authorList>
            <person name="Rhee J.H."/>
            <person name="Kim S.Y."/>
            <person name="Chung S.S."/>
            <person name="Kim J.J."/>
            <person name="Moon Y.H."/>
            <person name="Jeong H."/>
            <person name="Choy H.E."/>
        </authorList>
    </citation>
    <scope>NUCLEOTIDE SEQUENCE [LARGE SCALE GENOMIC DNA]</scope>
    <source>
        <strain>CMCP6</strain>
    </source>
</reference>
<gene>
    <name evidence="1" type="primary">lipB</name>
    <name type="ordered locus">VV1_0283</name>
</gene>
<evidence type="ECO:0000255" key="1">
    <source>
        <dbReference type="HAMAP-Rule" id="MF_00013"/>
    </source>
</evidence>
<evidence type="ECO:0000255" key="2">
    <source>
        <dbReference type="PROSITE-ProRule" id="PRU01067"/>
    </source>
</evidence>
<organism>
    <name type="scientific">Vibrio vulnificus (strain CMCP6)</name>
    <dbReference type="NCBI Taxonomy" id="216895"/>
    <lineage>
        <taxon>Bacteria</taxon>
        <taxon>Pseudomonadati</taxon>
        <taxon>Pseudomonadota</taxon>
        <taxon>Gammaproteobacteria</taxon>
        <taxon>Vibrionales</taxon>
        <taxon>Vibrionaceae</taxon>
        <taxon>Vibrio</taxon>
    </lineage>
</organism>
<comment type="function">
    <text evidence="1">Catalyzes the transfer of endogenously produced octanoic acid from octanoyl-acyl-carrier-protein onto the lipoyl domains of lipoate-dependent enzymes. Lipoyl-ACP can also act as a substrate although octanoyl-ACP is likely to be the physiological substrate.</text>
</comment>
<comment type="catalytic activity">
    <reaction evidence="1">
        <text>octanoyl-[ACP] + L-lysyl-[protein] = N(6)-octanoyl-L-lysyl-[protein] + holo-[ACP] + H(+)</text>
        <dbReference type="Rhea" id="RHEA:17665"/>
        <dbReference type="Rhea" id="RHEA-COMP:9636"/>
        <dbReference type="Rhea" id="RHEA-COMP:9685"/>
        <dbReference type="Rhea" id="RHEA-COMP:9752"/>
        <dbReference type="Rhea" id="RHEA-COMP:9928"/>
        <dbReference type="ChEBI" id="CHEBI:15378"/>
        <dbReference type="ChEBI" id="CHEBI:29969"/>
        <dbReference type="ChEBI" id="CHEBI:64479"/>
        <dbReference type="ChEBI" id="CHEBI:78463"/>
        <dbReference type="ChEBI" id="CHEBI:78809"/>
        <dbReference type="EC" id="2.3.1.181"/>
    </reaction>
</comment>
<comment type="pathway">
    <text evidence="1">Protein modification; protein lipoylation via endogenous pathway; protein N(6)-(lipoyl)lysine from octanoyl-[acyl-carrier-protein]: step 1/2.</text>
</comment>
<comment type="subcellular location">
    <subcellularLocation>
        <location evidence="1">Cytoplasm</location>
    </subcellularLocation>
</comment>
<comment type="miscellaneous">
    <text evidence="1">In the reaction, the free carboxyl group of octanoic acid is attached via an amide linkage to the epsilon-amino group of a specific lysine residue of lipoyl domains of lipoate-dependent enzymes.</text>
</comment>
<comment type="similarity">
    <text evidence="1">Belongs to the LipB family.</text>
</comment>
<dbReference type="EC" id="2.3.1.181" evidence="1"/>
<dbReference type="EMBL" id="AE016795">
    <property type="protein sequence ID" value="AAO08816.1"/>
    <property type="molecule type" value="Genomic_DNA"/>
</dbReference>
<dbReference type="RefSeq" id="WP_011078391.1">
    <property type="nucleotide sequence ID" value="NC_004459.3"/>
</dbReference>
<dbReference type="SMR" id="Q8DFD2"/>
<dbReference type="KEGG" id="vvu:VV1_0283"/>
<dbReference type="HOGENOM" id="CLU_035168_3_1_6"/>
<dbReference type="UniPathway" id="UPA00538">
    <property type="reaction ID" value="UER00592"/>
</dbReference>
<dbReference type="Proteomes" id="UP000002275">
    <property type="component" value="Chromosome 1"/>
</dbReference>
<dbReference type="GO" id="GO:0005737">
    <property type="term" value="C:cytoplasm"/>
    <property type="evidence" value="ECO:0007669"/>
    <property type="project" value="UniProtKB-SubCell"/>
</dbReference>
<dbReference type="GO" id="GO:0033819">
    <property type="term" value="F:lipoyl(octanoyl) transferase activity"/>
    <property type="evidence" value="ECO:0007669"/>
    <property type="project" value="UniProtKB-EC"/>
</dbReference>
<dbReference type="GO" id="GO:0036211">
    <property type="term" value="P:protein modification process"/>
    <property type="evidence" value="ECO:0007669"/>
    <property type="project" value="InterPro"/>
</dbReference>
<dbReference type="CDD" id="cd16444">
    <property type="entry name" value="LipB"/>
    <property type="match status" value="1"/>
</dbReference>
<dbReference type="FunFam" id="3.30.930.10:FF:000020">
    <property type="entry name" value="Octanoyltransferase"/>
    <property type="match status" value="1"/>
</dbReference>
<dbReference type="Gene3D" id="3.30.930.10">
    <property type="entry name" value="Bira Bifunctional Protein, Domain 2"/>
    <property type="match status" value="1"/>
</dbReference>
<dbReference type="HAMAP" id="MF_00013">
    <property type="entry name" value="LipB"/>
    <property type="match status" value="1"/>
</dbReference>
<dbReference type="InterPro" id="IPR045864">
    <property type="entry name" value="aa-tRNA-synth_II/BPL/LPL"/>
</dbReference>
<dbReference type="InterPro" id="IPR004143">
    <property type="entry name" value="BPL_LPL_catalytic"/>
</dbReference>
<dbReference type="InterPro" id="IPR000544">
    <property type="entry name" value="Octanoyltransferase"/>
</dbReference>
<dbReference type="InterPro" id="IPR020605">
    <property type="entry name" value="Octanoyltransferase_CS"/>
</dbReference>
<dbReference type="NCBIfam" id="TIGR00214">
    <property type="entry name" value="lipB"/>
    <property type="match status" value="1"/>
</dbReference>
<dbReference type="NCBIfam" id="NF010922">
    <property type="entry name" value="PRK14342.1"/>
    <property type="match status" value="1"/>
</dbReference>
<dbReference type="PANTHER" id="PTHR10993:SF7">
    <property type="entry name" value="LIPOYLTRANSFERASE 2, MITOCHONDRIAL-RELATED"/>
    <property type="match status" value="1"/>
</dbReference>
<dbReference type="PANTHER" id="PTHR10993">
    <property type="entry name" value="OCTANOYLTRANSFERASE"/>
    <property type="match status" value="1"/>
</dbReference>
<dbReference type="Pfam" id="PF21948">
    <property type="entry name" value="LplA-B_cat"/>
    <property type="match status" value="1"/>
</dbReference>
<dbReference type="PIRSF" id="PIRSF016262">
    <property type="entry name" value="LPLase"/>
    <property type="match status" value="1"/>
</dbReference>
<dbReference type="SUPFAM" id="SSF55681">
    <property type="entry name" value="Class II aaRS and biotin synthetases"/>
    <property type="match status" value="1"/>
</dbReference>
<dbReference type="PROSITE" id="PS51733">
    <property type="entry name" value="BPL_LPL_CATALYTIC"/>
    <property type="match status" value="1"/>
</dbReference>
<dbReference type="PROSITE" id="PS01313">
    <property type="entry name" value="LIPB"/>
    <property type="match status" value="1"/>
</dbReference>